<gene>
    <name evidence="3" type="primary">BOA14</name>
</gene>
<reference key="1">
    <citation type="journal article" date="2011" name="Mol. Plant Pathol.">
        <title>The Botrytis cinerea phytotoxin botcinic acid requires two polyketide synthases for production and has a redundant role in virulence with botrydial.</title>
        <authorList>
            <person name="Dalmais B."/>
            <person name="Schumacher J."/>
            <person name="Moraga J."/>
            <person name="Le Pecheur P."/>
            <person name="Tudzynski B."/>
            <person name="Collado I.G."/>
            <person name="Viaud M."/>
        </authorList>
    </citation>
    <scope>NUCLEOTIDE SEQUENCE [GENOMIC DNA]</scope>
    <scope>FUNCTION</scope>
    <scope>PATHWAY</scope>
    <source>
        <strain>B05.10</strain>
    </source>
</reference>
<reference key="2">
    <citation type="journal article" date="2013" name="ChemBioChem">
        <title>A shared biosynthetic pathway for botcinins and botrylactones revealed through gene deletions.</title>
        <authorList>
            <person name="Massaroli M."/>
            <person name="Moraga J."/>
            <person name="Bastos Borges K."/>
            <person name="Ramirez-Fernandez J."/>
            <person name="Viaud M."/>
            <person name="Gonzalez Collado I."/>
            <person name="Duran-Patron R."/>
            <person name="Hernandez-Galan R."/>
        </authorList>
    </citation>
    <scope>FUNCTION</scope>
</reference>
<name>BOA14_BOTFB</name>
<protein>
    <recommendedName>
        <fullName evidence="3">Botcinic acid biosynthesis cluster B protein 14</fullName>
    </recommendedName>
</protein>
<comment type="function">
    <text evidence="1 2 5">Part of the gene cluster B that mediates the biosynthesis of botcinic acid and its botcinin derivatives, acetate-derived polyketides that contribute to virulence when combined with the sesquiterpene botrydial (PubMed:21722295). Botcinic acid and its derivatives have been shown to induce chlorosis and necrosis during host plant infection, but also have antifungal activities (PubMed:21722295). Two polyketide synthases, BOA6 and BOA9, are involved in the biosynthesis of botcinins. BOA6 mediates the formation of the per-methylated tetraketide core by condensation of four units of malonyl-CoA with one unit of acetyl-CoA, which would be methylated in activated methylene groups to yield a bicyclic acid intermediate that could then either be converted to botrylactone derivatives or lose the starter acetate unit through a retro-Claisen type C-C bond cleavage to yield botcinin derivatives (PubMed:23203902). The second polyketide synthase, BOA9, is probably required for the biosynthesis of the tetraketide side chain of botcinins (Probable). The methyltransferase (MT) domain within BOA6 is probably responsible for the incorporation of four methyl groups (Probable). The trans-enoyl reductase BOA5 might take over the enoyl reductase function of BOA6 that misses an ER domain (Probable). The monooxygenases BOA2, BOA3 and BOA4 might be involved in further hydroxylations at C4, C5 and C8, whereas BOA7, close to BOA9, could potentially be involved in the hydroxylation at C4 in the side chain of botcinins (Probable).</text>
</comment>
<comment type="pathway">
    <text evidence="4">Polyketide biosynthesis.</text>
</comment>
<proteinExistence type="predicted"/>
<keyword id="KW-0843">Virulence</keyword>
<organism>
    <name type="scientific">Botryotinia fuckeliana (strain B05.10)</name>
    <name type="common">Noble rot fungus</name>
    <name type="synonym">Botrytis cinerea</name>
    <dbReference type="NCBI Taxonomy" id="332648"/>
    <lineage>
        <taxon>Eukaryota</taxon>
        <taxon>Fungi</taxon>
        <taxon>Dikarya</taxon>
        <taxon>Ascomycota</taxon>
        <taxon>Pezizomycotina</taxon>
        <taxon>Leotiomycetes</taxon>
        <taxon>Helotiales</taxon>
        <taxon>Sclerotiniaceae</taxon>
        <taxon>Botrytis</taxon>
    </lineage>
</organism>
<sequence length="56" mass="6627">MEVSARVRVLMQHALHTIERRYKQVLLLIQQLSQHGIQSYSISPFHIHCIYSCYSL</sequence>
<feature type="chain" id="PRO_0000444650" description="Botcinic acid biosynthesis cluster B protein 14">
    <location>
        <begin position="1"/>
        <end position="56"/>
    </location>
</feature>
<evidence type="ECO:0000269" key="1">
    <source>
    </source>
</evidence>
<evidence type="ECO:0000269" key="2">
    <source>
    </source>
</evidence>
<evidence type="ECO:0000303" key="3">
    <source>
    </source>
</evidence>
<evidence type="ECO:0000305" key="4">
    <source>
    </source>
</evidence>
<evidence type="ECO:0000305" key="5">
    <source>
    </source>
</evidence>
<dbReference type="EMBL" id="FR718883">
    <property type="protein sequence ID" value="CBX87037.1"/>
    <property type="molecule type" value="Genomic_DNA"/>
</dbReference>
<dbReference type="RefSeq" id="XP_001545618.1">
    <property type="nucleotide sequence ID" value="XM_001545568.1"/>
</dbReference>
<dbReference type="SMR" id="A6SSW5"/>
<accession>A6SSW5</accession>